<keyword id="KW-1003">Cell membrane</keyword>
<keyword id="KW-0342">GTP-binding</keyword>
<keyword id="KW-0378">Hydrolase</keyword>
<keyword id="KW-0449">Lipoprotein</keyword>
<keyword id="KW-0460">Magnesium</keyword>
<keyword id="KW-0472">Membrane</keyword>
<keyword id="KW-0479">Metal-binding</keyword>
<keyword id="KW-0519">Myristate</keyword>
<keyword id="KW-0547">Nucleotide-binding</keyword>
<keyword id="KW-0564">Palmitate</keyword>
<keyword id="KW-0611">Plant defense</keyword>
<keyword id="KW-1185">Reference proteome</keyword>
<keyword id="KW-0807">Transducer</keyword>
<reference key="1">
    <citation type="journal article" date="1995" name="Plant Cell Physiol.">
        <title>Molecular cloning and characterization of a cDNA for the alpha subunit of a G protein from rice.</title>
        <authorList>
            <person name="Ishikawa A."/>
            <person name="Tsubouchi H."/>
            <person name="Iwasaki Y."/>
            <person name="Asahi T."/>
        </authorList>
    </citation>
    <scope>NUCLEOTIDE SEQUENCE [MRNA]</scope>
    <source>
        <strain>cv. Nipponbare</strain>
        <tissue>Leaf</tissue>
    </source>
</reference>
<reference key="2">
    <citation type="journal article" date="2005" name="Mol. Genet. Genomics">
        <title>A fine physical map of the rice chromosome 5.</title>
        <authorList>
            <person name="Cheng C.-H."/>
            <person name="Chung M.C."/>
            <person name="Liu S.-M."/>
            <person name="Chen S.-K."/>
            <person name="Kao F.Y."/>
            <person name="Lin S.-J."/>
            <person name="Hsiao S.-H."/>
            <person name="Tseng I.C."/>
            <person name="Hsing Y.-I.C."/>
            <person name="Wu H.-P."/>
            <person name="Chen C.-S."/>
            <person name="Shaw J.-F."/>
            <person name="Wu J."/>
            <person name="Matsumoto T."/>
            <person name="Sasaki T."/>
            <person name="Chen H.-C."/>
            <person name="Chow T.-Y."/>
        </authorList>
    </citation>
    <scope>NUCLEOTIDE SEQUENCE [LARGE SCALE GENOMIC DNA]</scope>
    <source>
        <strain>cv. Nipponbare</strain>
    </source>
</reference>
<reference key="3">
    <citation type="journal article" date="2005" name="Nature">
        <title>The map-based sequence of the rice genome.</title>
        <authorList>
            <consortium name="International rice genome sequencing project (IRGSP)"/>
        </authorList>
    </citation>
    <scope>NUCLEOTIDE SEQUENCE [LARGE SCALE GENOMIC DNA]</scope>
    <source>
        <strain>cv. Nipponbare</strain>
    </source>
</reference>
<reference key="4">
    <citation type="journal article" date="2008" name="Nucleic Acids Res.">
        <title>The rice annotation project database (RAP-DB): 2008 update.</title>
        <authorList>
            <consortium name="The rice annotation project (RAP)"/>
        </authorList>
    </citation>
    <scope>GENOME REANNOTATION</scope>
    <source>
        <strain>cv. Nipponbare</strain>
    </source>
</reference>
<reference key="5">
    <citation type="journal article" date="2013" name="Rice">
        <title>Improvement of the Oryza sativa Nipponbare reference genome using next generation sequence and optical map data.</title>
        <authorList>
            <person name="Kawahara Y."/>
            <person name="de la Bastide M."/>
            <person name="Hamilton J.P."/>
            <person name="Kanamori H."/>
            <person name="McCombie W.R."/>
            <person name="Ouyang S."/>
            <person name="Schwartz D.C."/>
            <person name="Tanaka T."/>
            <person name="Wu J."/>
            <person name="Zhou S."/>
            <person name="Childs K.L."/>
            <person name="Davidson R.M."/>
            <person name="Lin H."/>
            <person name="Quesada-Ocampo L."/>
            <person name="Vaillancourt B."/>
            <person name="Sakai H."/>
            <person name="Lee S.S."/>
            <person name="Kim J."/>
            <person name="Numa H."/>
            <person name="Itoh T."/>
            <person name="Buell C.R."/>
            <person name="Matsumoto T."/>
        </authorList>
    </citation>
    <scope>GENOME REANNOTATION</scope>
    <source>
        <strain>cv. Nipponbare</strain>
    </source>
</reference>
<reference key="6">
    <citation type="journal article" date="1999" name="Proc. Natl. Acad. Sci. U.S.A.">
        <title>Suppression of the heterotrimeric G protein causes abnormal morphology, including dwarfism, in rice.</title>
        <authorList>
            <person name="Fujisawa Y."/>
            <person name="Kato T."/>
            <person name="Ohki S."/>
            <person name="Ishikawa A."/>
            <person name="Kitano H."/>
            <person name="Sasaki T."/>
            <person name="Asahi T."/>
            <person name="Iwasaki Y."/>
        </authorList>
    </citation>
    <scope>FUNCTION</scope>
    <scope>TISSUE SPECIFICITY</scope>
    <scope>DISRUPTION PHENOTYPE</scope>
</reference>
<reference key="7">
    <citation type="journal article" date="1999" name="Proc. Natl. Acad. Sci. U.S.A.">
        <title>Rice gibberellin-insensitive dwarf mutant gene Dwarf 1 encodes the alpha-subunit of GTP-binding protein.</title>
        <authorList>
            <person name="Ashikari M."/>
            <person name="Wu J."/>
            <person name="Yano M."/>
            <person name="Sasaki T."/>
            <person name="Yoshimura A."/>
        </authorList>
    </citation>
    <scope>FUNCTION</scope>
    <scope>DISRUPTION PHENOTYPE</scope>
</reference>
<reference key="8">
    <citation type="journal article" date="2000" name="Proc. Natl. Acad. Sci. U.S.A.">
        <title>Rice dwarf mutant d1, which is defective in the alpha subunit of the heterotrimeric G protein, affects gibberellin signal transduction.</title>
        <authorList>
            <person name="Ueguchi-Tanaka M."/>
            <person name="Fujisawa Y."/>
            <person name="Kobayashi M."/>
            <person name="Ashikari M."/>
            <person name="Iwasaki Y."/>
            <person name="Kitano H."/>
            <person name="Matsuoka M."/>
        </authorList>
    </citation>
    <scope>FUNCTION</scope>
</reference>
<reference key="9">
    <citation type="journal article" date="2002" name="Proc. Natl. Acad. Sci. U.S.A.">
        <title>The heterotrimeric G protein alpha subunit acts upstream of the small GTPase Rac in disease resistance of rice.</title>
        <authorList>
            <person name="Suharsono U."/>
            <person name="Fujisawa Y."/>
            <person name="Kawasaki T."/>
            <person name="Iwasaki Y."/>
            <person name="Satoh H."/>
            <person name="Shimamoto K."/>
        </authorList>
    </citation>
    <scope>FUNCTION</scope>
    <scope>INDUCTION</scope>
</reference>
<reference key="10">
    <citation type="journal article" date="2004" name="Plant J.">
        <title>Characterization of heterotrimeric G protein complexes in rice plasma membrane.</title>
        <authorList>
            <person name="Kato C."/>
            <person name="Mizutani T."/>
            <person name="Tamaki H."/>
            <person name="Kumagai H."/>
            <person name="Kamiya T."/>
            <person name="Hirobe A."/>
            <person name="Fujisawa Y."/>
            <person name="Kato H."/>
            <person name="Iwasaki Y."/>
        </authorList>
    </citation>
    <scope>SUBUNIT</scope>
    <scope>SUBCELLULAR LOCATION</scope>
    <scope>MUTAGENESIS OF GLN-223</scope>
</reference>
<reference key="11">
    <citation type="journal article" date="2006" name="Cell Res.">
        <title>Heterotrimeric G protein alpha subunit is involved in rice brassinosteroid response.</title>
        <authorList>
            <person name="Wang L."/>
            <person name="Xu Y.Y."/>
            <person name="Ma Q.B."/>
            <person name="Li D."/>
            <person name="Xu Z.H."/>
            <person name="Chong K."/>
        </authorList>
    </citation>
    <scope>FUNCTION</scope>
    <scope>INDUCTION</scope>
</reference>
<reference key="12">
    <citation type="journal article" date="2009" name="Plant Cell Physiol.">
        <title>Function of the alpha subunit of rice heterotrimeric G protein in brassinosteroid signaling.</title>
        <authorList>
            <person name="Oki K."/>
            <person name="Inaba N."/>
            <person name="Kitagawa K."/>
            <person name="Fujioka S."/>
            <person name="Kitano H."/>
            <person name="Fujisawa Y."/>
            <person name="Kato H."/>
            <person name="Iwasaki Y."/>
        </authorList>
    </citation>
    <scope>FUNCTION</scope>
</reference>
<reference key="13">
    <citation type="journal article" date="2013" name="PLoS Genet.">
        <title>The U-box E3 ubiquitin ligase TUD1 functions with a heterotrimeric G alpha subunit to regulate Brassinosteroid-mediated growth in rice.</title>
        <authorList>
            <person name="Hu X."/>
            <person name="Qian Q."/>
            <person name="Xu T."/>
            <person name="Zhang Y."/>
            <person name="Dong G."/>
            <person name="Gao T."/>
            <person name="Xie Q."/>
            <person name="Xue Y."/>
        </authorList>
    </citation>
    <scope>FUNCTION</scope>
    <scope>INTERACTION WITH TUD1</scope>
</reference>
<reference key="14">
    <citation type="journal article" date="2015" name="Cell">
        <title>COLD1 confers chilling tolerance in rice.</title>
        <authorList>
            <person name="Ma Y."/>
            <person name="Dai X."/>
            <person name="Xu Y."/>
            <person name="Luo W."/>
            <person name="Zheng X."/>
            <person name="Zeng D."/>
            <person name="Pan Y."/>
            <person name="Lin X."/>
            <person name="Liu H."/>
            <person name="Zhang D."/>
            <person name="Xiao J."/>
            <person name="Guo X."/>
            <person name="Xu S."/>
            <person name="Niu Y."/>
            <person name="Jin J."/>
            <person name="Zhang H."/>
            <person name="Xu X."/>
            <person name="Li L."/>
            <person name="Wang W."/>
            <person name="Qian Q."/>
            <person name="Ge S."/>
            <person name="Chong K."/>
        </authorList>
    </citation>
    <scope>INTERACTION WITH COLD1</scope>
    <source>
        <strain>cv. Dongjin</strain>
        <strain>cv. Nipponbare</strain>
    </source>
</reference>
<accession>Q0DJ33</accession>
<accession>P49083</accession>
<accession>Q2HNY6</accession>
<accession>Q43604</accession>
<accession>Q5KQF9</accession>
<accession>Q5W732</accession>
<gene>
    <name evidence="16" type="primary">GPA1</name>
    <name evidence="14" type="synonym">D1</name>
    <name type="synonym">GA1</name>
    <name evidence="15" type="synonym">RGA1</name>
    <name evidence="17" type="ordered locus">Os05g0333200</name>
    <name evidence="16" type="ordered locus">LOC_Os05g26890</name>
    <name type="ORF">OJ1005_D04.15</name>
    <name type="ORF">OSJNBa0049D13.1</name>
</gene>
<sequence>MGSSCSRSHSLSEAETTKNAKSADIDRRILQETKAEQHIHKLLLLGAGESGKSTIFKQIKLLFQTGFDEAELRSYTSVIHANVYQTIKILYEGAKELSQVESDSSKYVISPDNQEIGEKLSDIDGRLDYPLLNKELVLDVKRLWQDPAIQETYLRGSILQLPDCAQYFMENLDRLAEAGYVPTKEDVLYARVRTNGVVQIQFSPVGENKRGGEVYRLYDVGGQRNERRKWIHLFEGVNAVIFCAAISEYDQMLFEDETKNRMMETKELFDWVLKQRCFEKTSFILFLNKFDIFEKKIQKVPLSVCEWFKDYQPIAPGKQEVEHAYEFVKKKFEELYFQSSKPDRVDRVFKIYRTTALDQKLVKKTFKLIDESMRRSREGT</sequence>
<proteinExistence type="evidence at protein level"/>
<dbReference type="EMBL" id="D38232">
    <property type="protein sequence ID" value="BAA07405.1"/>
    <property type="molecule type" value="mRNA"/>
</dbReference>
<dbReference type="EMBL" id="AC117264">
    <property type="protein sequence ID" value="AAV43839.1"/>
    <property type="molecule type" value="Genomic_DNA"/>
</dbReference>
<dbReference type="EMBL" id="AC144739">
    <property type="protein sequence ID" value="AAW57778.2"/>
    <property type="molecule type" value="Genomic_DNA"/>
</dbReference>
<dbReference type="EMBL" id="AP008211">
    <property type="protein sequence ID" value="BAF17140.1"/>
    <property type="status" value="ALT_INIT"/>
    <property type="molecule type" value="Genomic_DNA"/>
</dbReference>
<dbReference type="EMBL" id="AP014961">
    <property type="status" value="NOT_ANNOTATED_CDS"/>
    <property type="molecule type" value="Genomic_DNA"/>
</dbReference>
<dbReference type="RefSeq" id="XP_015639183.1">
    <property type="nucleotide sequence ID" value="XM_015783697.1"/>
</dbReference>
<dbReference type="SMR" id="Q0DJ33"/>
<dbReference type="BioGRID" id="807485">
    <property type="interactions" value="235"/>
</dbReference>
<dbReference type="FunCoup" id="Q0DJ33">
    <property type="interactions" value="2423"/>
</dbReference>
<dbReference type="IntAct" id="Q0DJ33">
    <property type="interactions" value="1"/>
</dbReference>
<dbReference type="STRING" id="39947.Q0DJ33"/>
<dbReference type="PaxDb" id="39947-Q0DJ33"/>
<dbReference type="EnsemblPlants" id="Os05t0333200-01">
    <property type="protein sequence ID" value="Os05t0333200-01"/>
    <property type="gene ID" value="Os05g0333200"/>
</dbReference>
<dbReference type="Gramene" id="Os05t0333200-01">
    <property type="protein sequence ID" value="Os05t0333200-01"/>
    <property type="gene ID" value="Os05g0333200"/>
</dbReference>
<dbReference type="KEGG" id="dosa:Os05g0333200"/>
<dbReference type="eggNOG" id="KOG0082">
    <property type="taxonomic scope" value="Eukaryota"/>
</dbReference>
<dbReference type="HOGENOM" id="CLU_014184_4_0_1"/>
<dbReference type="InParanoid" id="Q0DJ33"/>
<dbReference type="OrthoDB" id="5817230at2759"/>
<dbReference type="Proteomes" id="UP000000763">
    <property type="component" value="Chromosome 5"/>
</dbReference>
<dbReference type="Proteomes" id="UP000059680">
    <property type="component" value="Chromosome 5"/>
</dbReference>
<dbReference type="GO" id="GO:0005737">
    <property type="term" value="C:cytoplasm"/>
    <property type="evidence" value="ECO:0000318"/>
    <property type="project" value="GO_Central"/>
</dbReference>
<dbReference type="GO" id="GO:0005834">
    <property type="term" value="C:heterotrimeric G-protein complex"/>
    <property type="evidence" value="ECO:0000318"/>
    <property type="project" value="GO_Central"/>
</dbReference>
<dbReference type="GO" id="GO:0005886">
    <property type="term" value="C:plasma membrane"/>
    <property type="evidence" value="ECO:0000314"/>
    <property type="project" value="UniProtKB"/>
</dbReference>
<dbReference type="GO" id="GO:0001664">
    <property type="term" value="F:G protein-coupled receptor binding"/>
    <property type="evidence" value="ECO:0000318"/>
    <property type="project" value="GO_Central"/>
</dbReference>
<dbReference type="GO" id="GO:0031683">
    <property type="term" value="F:G-protein beta/gamma-subunit complex binding"/>
    <property type="evidence" value="ECO:0000318"/>
    <property type="project" value="GO_Central"/>
</dbReference>
<dbReference type="GO" id="GO:0005525">
    <property type="term" value="F:GTP binding"/>
    <property type="evidence" value="ECO:0007669"/>
    <property type="project" value="UniProtKB-KW"/>
</dbReference>
<dbReference type="GO" id="GO:0003924">
    <property type="term" value="F:GTPase activity"/>
    <property type="evidence" value="ECO:0000318"/>
    <property type="project" value="GO_Central"/>
</dbReference>
<dbReference type="GO" id="GO:0046872">
    <property type="term" value="F:metal ion binding"/>
    <property type="evidence" value="ECO:0007669"/>
    <property type="project" value="UniProtKB-KW"/>
</dbReference>
<dbReference type="GO" id="GO:0007188">
    <property type="term" value="P:adenylate cyclase-modulating G protein-coupled receptor signaling pathway"/>
    <property type="evidence" value="ECO:0000318"/>
    <property type="project" value="GO_Central"/>
</dbReference>
<dbReference type="GO" id="GO:0009742">
    <property type="term" value="P:brassinosteroid mediated signaling pathway"/>
    <property type="evidence" value="ECO:0000315"/>
    <property type="project" value="UniProtKB"/>
</dbReference>
<dbReference type="GO" id="GO:0006952">
    <property type="term" value="P:defense response"/>
    <property type="evidence" value="ECO:0007669"/>
    <property type="project" value="UniProtKB-KW"/>
</dbReference>
<dbReference type="GO" id="GO:0010476">
    <property type="term" value="P:gibberellin mediated signaling pathway"/>
    <property type="evidence" value="ECO:0000315"/>
    <property type="project" value="UniProtKB"/>
</dbReference>
<dbReference type="GO" id="GO:0002758">
    <property type="term" value="P:innate immune response-activating signaling pathway"/>
    <property type="evidence" value="ECO:0000315"/>
    <property type="project" value="UniProtKB"/>
</dbReference>
<dbReference type="GO" id="GO:0048639">
    <property type="term" value="P:positive regulation of developmental growth"/>
    <property type="evidence" value="ECO:0000315"/>
    <property type="project" value="UniProtKB"/>
</dbReference>
<dbReference type="CDD" id="cd00066">
    <property type="entry name" value="G-alpha"/>
    <property type="match status" value="1"/>
</dbReference>
<dbReference type="FunFam" id="1.10.400.10:FF:000008">
    <property type="entry name" value="Guanine nucleotide-binding protein alpha-1 subunit"/>
    <property type="match status" value="1"/>
</dbReference>
<dbReference type="FunFam" id="3.40.50.300:FF:000733">
    <property type="entry name" value="Guanine nucleotide-binding protein alpha-1 subunit"/>
    <property type="match status" value="1"/>
</dbReference>
<dbReference type="Gene3D" id="1.10.400.10">
    <property type="entry name" value="GI Alpha 1, domain 2-like"/>
    <property type="match status" value="1"/>
</dbReference>
<dbReference type="Gene3D" id="3.40.50.300">
    <property type="entry name" value="P-loop containing nucleotide triphosphate hydrolases"/>
    <property type="match status" value="1"/>
</dbReference>
<dbReference type="InterPro" id="IPR001019">
    <property type="entry name" value="Gprotein_alpha_su"/>
</dbReference>
<dbReference type="InterPro" id="IPR011025">
    <property type="entry name" value="GproteinA_insert"/>
</dbReference>
<dbReference type="InterPro" id="IPR027417">
    <property type="entry name" value="P-loop_NTPase"/>
</dbReference>
<dbReference type="InterPro" id="IPR002976">
    <property type="entry name" value="Plant_Gprotein_alpha"/>
</dbReference>
<dbReference type="PANTHER" id="PTHR10218">
    <property type="entry name" value="GTP-BINDING PROTEIN ALPHA SUBUNIT"/>
    <property type="match status" value="1"/>
</dbReference>
<dbReference type="PANTHER" id="PTHR10218:SF302">
    <property type="entry name" value="GUANINE NUCLEOTIDE-BINDING PROTEIN ALPHA-5 SUBUNIT"/>
    <property type="match status" value="1"/>
</dbReference>
<dbReference type="Pfam" id="PF00503">
    <property type="entry name" value="G-alpha"/>
    <property type="match status" value="1"/>
</dbReference>
<dbReference type="PRINTS" id="PR00318">
    <property type="entry name" value="GPROTEINA"/>
</dbReference>
<dbReference type="PRINTS" id="PR01242">
    <property type="entry name" value="GPROTEINAPLT"/>
</dbReference>
<dbReference type="SMART" id="SM00275">
    <property type="entry name" value="G_alpha"/>
    <property type="match status" value="1"/>
</dbReference>
<dbReference type="SUPFAM" id="SSF52540">
    <property type="entry name" value="P-loop containing nucleoside triphosphate hydrolases"/>
    <property type="match status" value="1"/>
</dbReference>
<dbReference type="SUPFAM" id="SSF47895">
    <property type="entry name" value="Transducin (alpha subunit), insertion domain"/>
    <property type="match status" value="1"/>
</dbReference>
<dbReference type="PROSITE" id="PS51882">
    <property type="entry name" value="G_ALPHA"/>
    <property type="match status" value="1"/>
</dbReference>
<feature type="initiator methionine" description="Removed" evidence="1">
    <location>
        <position position="1"/>
    </location>
</feature>
<feature type="chain" id="PRO_0000203622" description="Guanine nucleotide-binding protein alpha-1 subunit">
    <location>
        <begin position="2"/>
        <end position="380"/>
    </location>
</feature>
<feature type="domain" description="G-alpha" evidence="3">
    <location>
        <begin position="38"/>
        <end position="380"/>
    </location>
</feature>
<feature type="region of interest" description="Disordered" evidence="4">
    <location>
        <begin position="1"/>
        <end position="25"/>
    </location>
</feature>
<feature type="region of interest" description="G1 motif" evidence="3">
    <location>
        <begin position="41"/>
        <end position="54"/>
    </location>
</feature>
<feature type="region of interest" description="G2 motif" evidence="3">
    <location>
        <begin position="186"/>
        <end position="194"/>
    </location>
</feature>
<feature type="region of interest" description="G3 motif" evidence="3">
    <location>
        <begin position="215"/>
        <end position="224"/>
    </location>
</feature>
<feature type="region of interest" description="G4 motif" evidence="3">
    <location>
        <begin position="284"/>
        <end position="291"/>
    </location>
</feature>
<feature type="region of interest" description="G5 motif" evidence="3">
    <location>
        <begin position="354"/>
        <end position="359"/>
    </location>
</feature>
<feature type="compositionally biased region" description="Basic and acidic residues" evidence="4">
    <location>
        <begin position="10"/>
        <end position="25"/>
    </location>
</feature>
<feature type="binding site" evidence="2">
    <location>
        <position position="49"/>
    </location>
    <ligand>
        <name>GTP</name>
        <dbReference type="ChEBI" id="CHEBI:37565"/>
    </ligand>
</feature>
<feature type="binding site" evidence="2">
    <location>
        <position position="50"/>
    </location>
    <ligand>
        <name>GTP</name>
        <dbReference type="ChEBI" id="CHEBI:37565"/>
    </ligand>
</feature>
<feature type="binding site" evidence="2">
    <location>
        <position position="51"/>
    </location>
    <ligand>
        <name>GTP</name>
        <dbReference type="ChEBI" id="CHEBI:37565"/>
    </ligand>
</feature>
<feature type="binding site" evidence="2">
    <location>
        <position position="52"/>
    </location>
    <ligand>
        <name>GTP</name>
        <dbReference type="ChEBI" id="CHEBI:37565"/>
    </ligand>
</feature>
<feature type="binding site" evidence="2">
    <location>
        <position position="53"/>
    </location>
    <ligand>
        <name>GTP</name>
        <dbReference type="ChEBI" id="CHEBI:37565"/>
    </ligand>
</feature>
<feature type="binding site" evidence="2">
    <location>
        <position position="53"/>
    </location>
    <ligand>
        <name>Mg(2+)</name>
        <dbReference type="ChEBI" id="CHEBI:18420"/>
    </ligand>
</feature>
<feature type="binding site" evidence="2">
    <location>
        <position position="54"/>
    </location>
    <ligand>
        <name>GTP</name>
        <dbReference type="ChEBI" id="CHEBI:37565"/>
    </ligand>
</feature>
<feature type="binding site" evidence="2">
    <location>
        <position position="163"/>
    </location>
    <ligand>
        <name>GTP</name>
        <dbReference type="ChEBI" id="CHEBI:37565"/>
    </ligand>
</feature>
<feature type="binding site" evidence="2">
    <location>
        <position position="188"/>
    </location>
    <ligand>
        <name>GTP</name>
        <dbReference type="ChEBI" id="CHEBI:37565"/>
    </ligand>
</feature>
<feature type="binding site" evidence="2">
    <location>
        <position position="189"/>
    </location>
    <ligand>
        <name>GTP</name>
        <dbReference type="ChEBI" id="CHEBI:37565"/>
    </ligand>
</feature>
<feature type="binding site" evidence="2">
    <location>
        <position position="194"/>
    </location>
    <ligand>
        <name>GTP</name>
        <dbReference type="ChEBI" id="CHEBI:37565"/>
    </ligand>
</feature>
<feature type="binding site" evidence="2">
    <location>
        <position position="194"/>
    </location>
    <ligand>
        <name>Mg(2+)</name>
        <dbReference type="ChEBI" id="CHEBI:18420"/>
    </ligand>
</feature>
<feature type="binding site" evidence="2">
    <location>
        <position position="222"/>
    </location>
    <ligand>
        <name>GTP</name>
        <dbReference type="ChEBI" id="CHEBI:37565"/>
    </ligand>
</feature>
<feature type="binding site" evidence="2">
    <location>
        <position position="288"/>
    </location>
    <ligand>
        <name>GTP</name>
        <dbReference type="ChEBI" id="CHEBI:37565"/>
    </ligand>
</feature>
<feature type="binding site" evidence="2">
    <location>
        <position position="289"/>
    </location>
    <ligand>
        <name>GTP</name>
        <dbReference type="ChEBI" id="CHEBI:37565"/>
    </ligand>
</feature>
<feature type="binding site" evidence="2">
    <location>
        <position position="291"/>
    </location>
    <ligand>
        <name>GTP</name>
        <dbReference type="ChEBI" id="CHEBI:37565"/>
    </ligand>
</feature>
<feature type="binding site" evidence="2">
    <location>
        <position position="356"/>
    </location>
    <ligand>
        <name>GTP</name>
        <dbReference type="ChEBI" id="CHEBI:37565"/>
    </ligand>
</feature>
<feature type="lipid moiety-binding region" description="N-myristoyl glycine" evidence="2">
    <location>
        <position position="2"/>
    </location>
</feature>
<feature type="lipid moiety-binding region" description="S-palmitoyl cysteine" evidence="2">
    <location>
        <position position="5"/>
    </location>
</feature>
<feature type="mutagenesis site" description="Constitutively active." evidence="9">
    <original>Q</original>
    <variation>L</variation>
    <location>
        <position position="223"/>
    </location>
</feature>
<evidence type="ECO:0000250" key="1"/>
<evidence type="ECO:0000250" key="2">
    <source>
        <dbReference type="UniProtKB" id="P18064"/>
    </source>
</evidence>
<evidence type="ECO:0000255" key="3">
    <source>
        <dbReference type="PROSITE-ProRule" id="PRU01230"/>
    </source>
</evidence>
<evidence type="ECO:0000256" key="4">
    <source>
        <dbReference type="SAM" id="MobiDB-lite"/>
    </source>
</evidence>
<evidence type="ECO:0000269" key="5">
    <source>
    </source>
</evidence>
<evidence type="ECO:0000269" key="6">
    <source>
    </source>
</evidence>
<evidence type="ECO:0000269" key="7">
    <source>
    </source>
</evidence>
<evidence type="ECO:0000269" key="8">
    <source>
    </source>
</evidence>
<evidence type="ECO:0000269" key="9">
    <source>
    </source>
</evidence>
<evidence type="ECO:0000269" key="10">
    <source>
    </source>
</evidence>
<evidence type="ECO:0000269" key="11">
    <source>
    </source>
</evidence>
<evidence type="ECO:0000269" key="12">
    <source>
    </source>
</evidence>
<evidence type="ECO:0000269" key="13">
    <source>
    </source>
</evidence>
<evidence type="ECO:0000303" key="14">
    <source>
    </source>
</evidence>
<evidence type="ECO:0000303" key="15">
    <source>
    </source>
</evidence>
<evidence type="ECO:0000305" key="16"/>
<evidence type="ECO:0000312" key="17">
    <source>
        <dbReference type="EMBL" id="BAF17140.1"/>
    </source>
</evidence>
<name>GPA1_ORYSJ</name>
<protein>
    <recommendedName>
        <fullName>Guanine nucleotide-binding protein alpha-1 subunit</fullName>
        <shortName>GP-alpha-1</shortName>
    </recommendedName>
    <alternativeName>
        <fullName evidence="14">Protein Daikoku dwarf</fullName>
    </alternativeName>
    <alternativeName>
        <fullName>Protein Dwarf1</fullName>
    </alternativeName>
</protein>
<organism>
    <name type="scientific">Oryza sativa subsp. japonica</name>
    <name type="common">Rice</name>
    <dbReference type="NCBI Taxonomy" id="39947"/>
    <lineage>
        <taxon>Eukaryota</taxon>
        <taxon>Viridiplantae</taxon>
        <taxon>Streptophyta</taxon>
        <taxon>Embryophyta</taxon>
        <taxon>Tracheophyta</taxon>
        <taxon>Spermatophyta</taxon>
        <taxon>Magnoliopsida</taxon>
        <taxon>Liliopsida</taxon>
        <taxon>Poales</taxon>
        <taxon>Poaceae</taxon>
        <taxon>BOP clade</taxon>
        <taxon>Oryzoideae</taxon>
        <taxon>Oryzeae</taxon>
        <taxon>Oryzinae</taxon>
        <taxon>Oryza</taxon>
        <taxon>Oryza sativa</taxon>
    </lineage>
</organism>
<comment type="function">
    <text evidence="5 6 7 8 10 11 12 16">Guanine nucleotide-binding proteins (G proteins) are involved as modulators or transducers in various transmembrane signaling systems (Probable). May function in a signal transduction pathway required for normal growth and development of internodes, leaves, panicles and seeds (PubMed:10377457). Involved in gibberellin signal transduction (PubMed:10468600, PubMed:11027362). Involved in R gene-mediated disease resistance. Functions upstream of the small GTPase RAC1 in the early steps of signaling (PubMed:12237405). Involved in brassinosteroid (BR) response. May not be a signaling molecule in BRI1-mediated perception or transduction (PubMed:17117160, PubMed:19036785). Acts together with the E3 ubiquitin ligase TUD1 to mediate a BR signaling pathway that affects plant growth and development (PubMed:23526892).</text>
</comment>
<comment type="cofactor">
    <cofactor evidence="2">
        <name>Mg(2+)</name>
        <dbReference type="ChEBI" id="CHEBI:18420"/>
    </cofactor>
</comment>
<comment type="subunit">
    <text evidence="9 12 13">G proteins are composed of 3 units; alpha, beta and gamma. The alpha chain contains the guanine nucleotide binding site (PubMed:15078334). Interacts with COLD1 (PubMed:25728666). Interacts with TUD1 (PubMed:23526892).</text>
</comment>
<comment type="interaction">
    <interactant intactId="EBI-1100098">
        <id>Q0DJ33</id>
    </interactant>
    <interactant intactId="EBI-1100119">
        <id>Q40687</id>
        <label>RGB1</label>
    </interactant>
    <organismsDiffer>false</organismsDiffer>
    <experiments>2</experiments>
</comment>
<comment type="subcellular location">
    <subcellularLocation>
        <location evidence="9">Cell membrane</location>
    </subcellularLocation>
</comment>
<comment type="tissue specificity">
    <text evidence="5">Highly expressed in young internodes. Expressed in the base of the stamen, pistil, lemma, and palea before flowering and in the pericarp of the ovary after fertilization.</text>
</comment>
<comment type="induction">
    <text evidence="8 10">By infection with an avirulent race of rice blast fungus (M.grisea) and sphingolipid elicitors (PubMed:12237405). Down-regulated by a virulent race of rice blast fungus (M.grisea) (PubMed:12237405). Down-regulated by 24-epi-brassinolide (PubMed:17117160).</text>
</comment>
<comment type="domain">
    <text evidence="1">The helical domain (69-189) is required for self-activation.</text>
</comment>
<comment type="disruption phenotype">
    <text evidence="5 6">Dwarf plants and small seeds (PubMed:10377457, PubMed:10468600). Short internodes, leaves and panicles (PubMed:10377457).</text>
</comment>
<comment type="similarity">
    <text evidence="16">Belongs to the G-alpha family.</text>
</comment>
<comment type="sequence caution" evidence="16">
    <conflict type="erroneous initiation">
        <sequence resource="EMBL-CDS" id="BAF17140"/>
    </conflict>
    <text>Extended N-terminus.</text>
</comment>